<accession>B1JI86</accession>
<comment type="catalytic activity">
    <reaction evidence="1">
        <text>Hydrolysis of terminal non-reducing beta-D-galactose residues in beta-D-galactosides.</text>
        <dbReference type="EC" id="3.2.1.23"/>
    </reaction>
</comment>
<comment type="cofactor">
    <cofactor evidence="1">
        <name>Mg(2+)</name>
        <dbReference type="ChEBI" id="CHEBI:18420"/>
    </cofactor>
    <text evidence="1">Binds 2 magnesium ions per monomer.</text>
</comment>
<comment type="cofactor">
    <cofactor evidence="1">
        <name>Na(+)</name>
        <dbReference type="ChEBI" id="CHEBI:29101"/>
    </cofactor>
    <text evidence="1">Binds 1 sodium ion per monomer.</text>
</comment>
<comment type="subunit">
    <text evidence="1">Homotetramer.</text>
</comment>
<comment type="similarity">
    <text evidence="1">Belongs to the glycosyl hydrolase 2 family.</text>
</comment>
<gene>
    <name evidence="1" type="primary">lacZ</name>
    <name type="ordered locus">YPK_1739</name>
</gene>
<dbReference type="EC" id="3.2.1.23" evidence="1"/>
<dbReference type="EMBL" id="CP000950">
    <property type="protein sequence ID" value="ACA68032.1"/>
    <property type="molecule type" value="Genomic_DNA"/>
</dbReference>
<dbReference type="RefSeq" id="WP_011192578.1">
    <property type="nucleotide sequence ID" value="NZ_CP009792.1"/>
</dbReference>
<dbReference type="SMR" id="B1JI86"/>
<dbReference type="CAZy" id="GH2">
    <property type="family name" value="Glycoside Hydrolase Family 2"/>
</dbReference>
<dbReference type="KEGG" id="ypy:YPK_1739"/>
<dbReference type="PATRIC" id="fig|502800.11.peg.2403"/>
<dbReference type="GO" id="GO:0009341">
    <property type="term" value="C:beta-galactosidase complex"/>
    <property type="evidence" value="ECO:0007669"/>
    <property type="project" value="InterPro"/>
</dbReference>
<dbReference type="GO" id="GO:0004565">
    <property type="term" value="F:beta-galactosidase activity"/>
    <property type="evidence" value="ECO:0007669"/>
    <property type="project" value="UniProtKB-EC"/>
</dbReference>
<dbReference type="GO" id="GO:0030246">
    <property type="term" value="F:carbohydrate binding"/>
    <property type="evidence" value="ECO:0007669"/>
    <property type="project" value="InterPro"/>
</dbReference>
<dbReference type="GO" id="GO:0000287">
    <property type="term" value="F:magnesium ion binding"/>
    <property type="evidence" value="ECO:0007669"/>
    <property type="project" value="UniProtKB-UniRule"/>
</dbReference>
<dbReference type="GO" id="GO:0005990">
    <property type="term" value="P:lactose catabolic process"/>
    <property type="evidence" value="ECO:0007669"/>
    <property type="project" value="TreeGrafter"/>
</dbReference>
<dbReference type="FunFam" id="2.60.120.260:FF:000058">
    <property type="entry name" value="Beta-galactosidase"/>
    <property type="match status" value="1"/>
</dbReference>
<dbReference type="FunFam" id="3.20.20.80:FF:000018">
    <property type="entry name" value="Beta-galactosidase"/>
    <property type="match status" value="1"/>
</dbReference>
<dbReference type="Gene3D" id="2.70.98.10">
    <property type="match status" value="1"/>
</dbReference>
<dbReference type="Gene3D" id="2.60.120.260">
    <property type="entry name" value="Galactose-binding domain-like"/>
    <property type="match status" value="1"/>
</dbReference>
<dbReference type="Gene3D" id="3.20.20.80">
    <property type="entry name" value="Glycosidases"/>
    <property type="match status" value="1"/>
</dbReference>
<dbReference type="Gene3D" id="2.60.40.10">
    <property type="entry name" value="Immunoglobulins"/>
    <property type="match status" value="2"/>
</dbReference>
<dbReference type="HAMAP" id="MF_01687">
    <property type="entry name" value="Beta_gal"/>
    <property type="match status" value="1"/>
</dbReference>
<dbReference type="InterPro" id="IPR004199">
    <property type="entry name" value="B-gal_small/dom_5"/>
</dbReference>
<dbReference type="InterPro" id="IPR050347">
    <property type="entry name" value="Bact_Beta-galactosidase"/>
</dbReference>
<dbReference type="InterPro" id="IPR036156">
    <property type="entry name" value="Beta-gal/glucu_dom_sf"/>
</dbReference>
<dbReference type="InterPro" id="IPR011013">
    <property type="entry name" value="Gal_mutarotase_sf_dom"/>
</dbReference>
<dbReference type="InterPro" id="IPR008979">
    <property type="entry name" value="Galactose-bd-like_sf"/>
</dbReference>
<dbReference type="InterPro" id="IPR014718">
    <property type="entry name" value="GH-type_carb-bd"/>
</dbReference>
<dbReference type="InterPro" id="IPR006101">
    <property type="entry name" value="Glyco_hydro_2"/>
</dbReference>
<dbReference type="InterPro" id="IPR023232">
    <property type="entry name" value="Glyco_hydro_2_AS"/>
</dbReference>
<dbReference type="InterPro" id="IPR023933">
    <property type="entry name" value="Glyco_hydro_2_beta_Galsidase"/>
</dbReference>
<dbReference type="InterPro" id="IPR006103">
    <property type="entry name" value="Glyco_hydro_2_cat"/>
</dbReference>
<dbReference type="InterPro" id="IPR023230">
    <property type="entry name" value="Glyco_hydro_2_CS"/>
</dbReference>
<dbReference type="InterPro" id="IPR006102">
    <property type="entry name" value="Glyco_hydro_2_Ig-like"/>
</dbReference>
<dbReference type="InterPro" id="IPR006104">
    <property type="entry name" value="Glyco_hydro_2_N"/>
</dbReference>
<dbReference type="InterPro" id="IPR017853">
    <property type="entry name" value="Glycoside_hydrolase_SF"/>
</dbReference>
<dbReference type="InterPro" id="IPR013783">
    <property type="entry name" value="Ig-like_fold"/>
</dbReference>
<dbReference type="InterPro" id="IPR032312">
    <property type="entry name" value="LacZ_4"/>
</dbReference>
<dbReference type="NCBIfam" id="NF007074">
    <property type="entry name" value="PRK09525.1"/>
    <property type="match status" value="1"/>
</dbReference>
<dbReference type="PANTHER" id="PTHR46323">
    <property type="entry name" value="BETA-GALACTOSIDASE"/>
    <property type="match status" value="1"/>
</dbReference>
<dbReference type="PANTHER" id="PTHR46323:SF2">
    <property type="entry name" value="BETA-GALACTOSIDASE"/>
    <property type="match status" value="1"/>
</dbReference>
<dbReference type="Pfam" id="PF02929">
    <property type="entry name" value="Bgal_small_N"/>
    <property type="match status" value="1"/>
</dbReference>
<dbReference type="Pfam" id="PF00703">
    <property type="entry name" value="Glyco_hydro_2"/>
    <property type="match status" value="1"/>
</dbReference>
<dbReference type="Pfam" id="PF02836">
    <property type="entry name" value="Glyco_hydro_2_C"/>
    <property type="match status" value="1"/>
</dbReference>
<dbReference type="Pfam" id="PF02837">
    <property type="entry name" value="Glyco_hydro_2_N"/>
    <property type="match status" value="1"/>
</dbReference>
<dbReference type="Pfam" id="PF16353">
    <property type="entry name" value="LacZ_4"/>
    <property type="match status" value="1"/>
</dbReference>
<dbReference type="PRINTS" id="PR00132">
    <property type="entry name" value="GLHYDRLASE2"/>
</dbReference>
<dbReference type="SMART" id="SM01038">
    <property type="entry name" value="Bgal_small_N"/>
    <property type="match status" value="1"/>
</dbReference>
<dbReference type="SUPFAM" id="SSF51445">
    <property type="entry name" value="(Trans)glycosidases"/>
    <property type="match status" value="1"/>
</dbReference>
<dbReference type="SUPFAM" id="SSF49303">
    <property type="entry name" value="beta-Galactosidase/glucuronidase domain"/>
    <property type="match status" value="2"/>
</dbReference>
<dbReference type="SUPFAM" id="SSF74650">
    <property type="entry name" value="Galactose mutarotase-like"/>
    <property type="match status" value="1"/>
</dbReference>
<dbReference type="SUPFAM" id="SSF49785">
    <property type="entry name" value="Galactose-binding domain-like"/>
    <property type="match status" value="1"/>
</dbReference>
<dbReference type="PROSITE" id="PS00719">
    <property type="entry name" value="GLYCOSYL_HYDROL_F2_1"/>
    <property type="match status" value="1"/>
</dbReference>
<dbReference type="PROSITE" id="PS00608">
    <property type="entry name" value="GLYCOSYL_HYDROL_F2_2"/>
    <property type="match status" value="1"/>
</dbReference>
<sequence>MTSQEKVPFQVQLSLPQILSRRDWENPQITQYHRLEAHPPFHSWRDVESAQKDRPSPQQQTLNGLWSFSYFTQPEAVPEHWVRCDLAEAKPLPVPANWQLHGYDAPIYTNIQYPIPVNPPRVPDLNPTGCYSRDFTLEPSWLASGKTRIIFDGVSSAFYLWCNGQWVGYSQDSRLPAEFDLTPYLQAGSNRIAVLVLRWSDGSYLEDQDMWRMSGIFRDVKLLHKPEIHLRDIHIMTHLSPEFTSANLEVMAAVNIPSLQLNDPQVTGSYQLRVQLWLADKLVASLQQPLGTQAIDERGPYTDRTQLVLRIDQPLLWSAEQPTLYRAVVSLLNHQQELIEAEAYDVGFRQVAIHQGLLKINGKAVLIRGVNRHEHHPQTGQAIDEESLLQDILLMKQHNFNAVRCSHYPNHPLWYRLCDRYGLYVVDEANIETHGMQPMSRLSDDPSWFSAFSERVTRMVQRDRNHPCIIIWSLGNESGHGATHDALYRWIKTNDPTRPVQYEGGGANTLATDILCPMYARVDEDQPFPAVPKWSIKKWIGLPNESRPLILCEYAHAMGNSFGGFARYWQAFRQYPRLQGGFIWDWVDQSLTHHNDHGQPYWAYGGDFGDTPNDRQFCMNGLVFPDRSPHPSLYEAQCAQQFFQFSLLSTTPLVINITSEYLFRESDNEQLYWRIMLEGESVLEGSQPLNLSPESSQCYRLAEKLPTLNKPGQLWLNVEIRQPKETPWSPAQHRSAWHQWRLPQPLFSPSSDLTNATAHYAPQLQHNLQLQHNRQLQHDLQLQQDEQHIKVTYQQQCWQFSRQTGRLDQWWVADKPMLLRPLQDQFVRAPLDNDIGISEATHIDPNAWVERWKKAGMYQLQQRCLSLHVDHLSHSVQISAEYGYEFEQEPLLHSHWVYRFDRHGRMTIDVNVRIATSLPAPARIGMCCQLADISPTVEWLGLGPHENYPDRQLAAQYGHWSLPLEQMHTAYIFPSENGLRCNTHTLNYGRWTLTGDFHFGISRYSTQQLMVTSHQHLLEPEEGTWLNIDGFHMGVGGDDSWSPSVHIDDILTRETYQYQICWQYKV</sequence>
<organism>
    <name type="scientific">Yersinia pseudotuberculosis serotype O:3 (strain YPIII)</name>
    <dbReference type="NCBI Taxonomy" id="502800"/>
    <lineage>
        <taxon>Bacteria</taxon>
        <taxon>Pseudomonadati</taxon>
        <taxon>Pseudomonadota</taxon>
        <taxon>Gammaproteobacteria</taxon>
        <taxon>Enterobacterales</taxon>
        <taxon>Yersiniaceae</taxon>
        <taxon>Yersinia</taxon>
    </lineage>
</organism>
<name>BGAL_YERPY</name>
<proteinExistence type="inferred from homology"/>
<protein>
    <recommendedName>
        <fullName evidence="1">Beta-galactosidase</fullName>
        <shortName evidence="1">Beta-gal</shortName>
        <ecNumber evidence="1">3.2.1.23</ecNumber>
    </recommendedName>
    <alternativeName>
        <fullName evidence="1">Lactase</fullName>
    </alternativeName>
</protein>
<reference key="1">
    <citation type="submission" date="2008-02" db="EMBL/GenBank/DDBJ databases">
        <title>Complete sequence of Yersinia pseudotuberculosis YPIII.</title>
        <authorList>
            <consortium name="US DOE Joint Genome Institute"/>
            <person name="Copeland A."/>
            <person name="Lucas S."/>
            <person name="Lapidus A."/>
            <person name="Glavina del Rio T."/>
            <person name="Dalin E."/>
            <person name="Tice H."/>
            <person name="Bruce D."/>
            <person name="Goodwin L."/>
            <person name="Pitluck S."/>
            <person name="Munk A.C."/>
            <person name="Brettin T."/>
            <person name="Detter J.C."/>
            <person name="Han C."/>
            <person name="Tapia R."/>
            <person name="Schmutz J."/>
            <person name="Larimer F."/>
            <person name="Land M."/>
            <person name="Hauser L."/>
            <person name="Challacombe J.F."/>
            <person name="Green L."/>
            <person name="Lindler L.E."/>
            <person name="Nikolich M.P."/>
            <person name="Richardson P."/>
        </authorList>
    </citation>
    <scope>NUCLEOTIDE SEQUENCE [LARGE SCALE GENOMIC DNA]</scope>
    <source>
        <strain>YPIII</strain>
    </source>
</reference>
<keyword id="KW-0326">Glycosidase</keyword>
<keyword id="KW-0378">Hydrolase</keyword>
<keyword id="KW-0460">Magnesium</keyword>
<keyword id="KW-0479">Metal-binding</keyword>
<keyword id="KW-0915">Sodium</keyword>
<evidence type="ECO:0000255" key="1">
    <source>
        <dbReference type="HAMAP-Rule" id="MF_01687"/>
    </source>
</evidence>
<feature type="chain" id="PRO_0000367023" description="Beta-galactosidase">
    <location>
        <begin position="1"/>
        <end position="1066"/>
    </location>
</feature>
<feature type="active site" description="Proton donor" evidence="1">
    <location>
        <position position="477"/>
    </location>
</feature>
<feature type="active site" description="Nucleophile" evidence="1">
    <location>
        <position position="553"/>
    </location>
</feature>
<feature type="binding site" evidence="1">
    <location>
        <position position="110"/>
    </location>
    <ligand>
        <name>substrate</name>
    </ligand>
</feature>
<feature type="binding site" evidence="1">
    <location>
        <position position="209"/>
    </location>
    <ligand>
        <name>Na(+)</name>
        <dbReference type="ChEBI" id="CHEBI:29101"/>
    </ligand>
</feature>
<feature type="binding site" evidence="1">
    <location>
        <position position="209"/>
    </location>
    <ligand>
        <name>substrate</name>
    </ligand>
</feature>
<feature type="binding site" evidence="1">
    <location>
        <position position="432"/>
    </location>
    <ligand>
        <name>Mg(2+)</name>
        <dbReference type="ChEBI" id="CHEBI:18420"/>
        <label>1</label>
    </ligand>
</feature>
<feature type="binding site" evidence="1">
    <location>
        <position position="434"/>
    </location>
    <ligand>
        <name>Mg(2+)</name>
        <dbReference type="ChEBI" id="CHEBI:18420"/>
        <label>1</label>
    </ligand>
</feature>
<feature type="binding site" evidence="1">
    <location>
        <position position="477"/>
    </location>
    <ligand>
        <name>Mg(2+)</name>
        <dbReference type="ChEBI" id="CHEBI:18420"/>
        <label>1</label>
    </ligand>
</feature>
<feature type="binding site" evidence="1">
    <location>
        <position position="477"/>
    </location>
    <ligand>
        <name>substrate</name>
    </ligand>
</feature>
<feature type="binding site" evidence="1">
    <location>
        <begin position="553"/>
        <end position="556"/>
    </location>
    <ligand>
        <name>substrate</name>
    </ligand>
</feature>
<feature type="binding site" evidence="1">
    <location>
        <position position="613"/>
    </location>
    <ligand>
        <name>Mg(2+)</name>
        <dbReference type="ChEBI" id="CHEBI:18420"/>
        <label>2</label>
    </ligand>
</feature>
<feature type="binding site" evidence="1">
    <location>
        <position position="617"/>
    </location>
    <ligand>
        <name>Na(+)</name>
        <dbReference type="ChEBI" id="CHEBI:29101"/>
    </ligand>
</feature>
<feature type="binding site" evidence="1">
    <location>
        <position position="620"/>
    </location>
    <ligand>
        <name>Na(+)</name>
        <dbReference type="ChEBI" id="CHEBI:29101"/>
    </ligand>
</feature>
<feature type="binding site" evidence="1">
    <location>
        <position position="620"/>
    </location>
    <ligand>
        <name>substrate</name>
    </ligand>
</feature>
<feature type="binding site" evidence="1">
    <location>
        <position position="1041"/>
    </location>
    <ligand>
        <name>substrate</name>
    </ligand>
</feature>
<feature type="site" description="Transition state stabilizer" evidence="1">
    <location>
        <position position="373"/>
    </location>
</feature>
<feature type="site" description="Transition state stabilizer" evidence="1">
    <location>
        <position position="407"/>
    </location>
</feature>